<keyword id="KW-1185">Reference proteome</keyword>
<keyword id="KW-0687">Ribonucleoprotein</keyword>
<keyword id="KW-0689">Ribosomal protein</keyword>
<keyword id="KW-0694">RNA-binding</keyword>
<keyword id="KW-0699">rRNA-binding</keyword>
<accession>Q5ZYN2</accession>
<organism>
    <name type="scientific">Legionella pneumophila subsp. pneumophila (strain Philadelphia 1 / ATCC 33152 / DSM 7513)</name>
    <dbReference type="NCBI Taxonomy" id="272624"/>
    <lineage>
        <taxon>Bacteria</taxon>
        <taxon>Pseudomonadati</taxon>
        <taxon>Pseudomonadota</taxon>
        <taxon>Gammaproteobacteria</taxon>
        <taxon>Legionellales</taxon>
        <taxon>Legionellaceae</taxon>
        <taxon>Legionella</taxon>
    </lineage>
</organism>
<reference key="1">
    <citation type="journal article" date="2004" name="Science">
        <title>The genomic sequence of the accidental pathogen Legionella pneumophila.</title>
        <authorList>
            <person name="Chien M."/>
            <person name="Morozova I."/>
            <person name="Shi S."/>
            <person name="Sheng H."/>
            <person name="Chen J."/>
            <person name="Gomez S.M."/>
            <person name="Asamani G."/>
            <person name="Hill K."/>
            <person name="Nuara J."/>
            <person name="Feder M."/>
            <person name="Rineer J."/>
            <person name="Greenberg J.J."/>
            <person name="Steshenko V."/>
            <person name="Park S.H."/>
            <person name="Zhao B."/>
            <person name="Teplitskaya E."/>
            <person name="Edwards J.R."/>
            <person name="Pampou S."/>
            <person name="Georghiou A."/>
            <person name="Chou I.-C."/>
            <person name="Iannuccilli W."/>
            <person name="Ulz M.E."/>
            <person name="Kim D.H."/>
            <person name="Geringer-Sameth A."/>
            <person name="Goldsberry C."/>
            <person name="Morozov P."/>
            <person name="Fischer S.G."/>
            <person name="Segal G."/>
            <person name="Qu X."/>
            <person name="Rzhetsky A."/>
            <person name="Zhang P."/>
            <person name="Cayanis E."/>
            <person name="De Jong P.J."/>
            <person name="Ju J."/>
            <person name="Kalachikov S."/>
            <person name="Shuman H.A."/>
            <person name="Russo J.J."/>
        </authorList>
    </citation>
    <scope>NUCLEOTIDE SEQUENCE [LARGE SCALE GENOMIC DNA]</scope>
    <source>
        <strain>Philadelphia 1 / ATCC 33152 / DSM 7513</strain>
    </source>
</reference>
<comment type="function">
    <text evidence="1">One of two assembly initiator proteins, it binds directly to the 5'-end of the 23S rRNA, where it nucleates assembly of the 50S subunit.</text>
</comment>
<comment type="function">
    <text evidence="1">One of the proteins that surrounds the polypeptide exit tunnel on the outside of the subunit.</text>
</comment>
<comment type="subunit">
    <text evidence="1">Part of the 50S ribosomal subunit.</text>
</comment>
<comment type="similarity">
    <text evidence="1">Belongs to the universal ribosomal protein uL24 family.</text>
</comment>
<feature type="chain" id="PRO_0000241614" description="Large ribosomal subunit protein uL24">
    <location>
        <begin position="1"/>
        <end position="109"/>
    </location>
</feature>
<name>RL24_LEGPH</name>
<proteinExistence type="inferred from homology"/>
<protein>
    <recommendedName>
        <fullName evidence="1">Large ribosomal subunit protein uL24</fullName>
    </recommendedName>
    <alternativeName>
        <fullName evidence="2">50S ribosomal protein L24</fullName>
    </alternativeName>
</protein>
<gene>
    <name evidence="1" type="primary">rplX</name>
    <name type="ordered locus">lpg0340</name>
</gene>
<dbReference type="EMBL" id="AE017354">
    <property type="protein sequence ID" value="AAU26437.1"/>
    <property type="molecule type" value="Genomic_DNA"/>
</dbReference>
<dbReference type="RefSeq" id="WP_010946089.1">
    <property type="nucleotide sequence ID" value="NC_002942.5"/>
</dbReference>
<dbReference type="RefSeq" id="YP_094384.1">
    <property type="nucleotide sequence ID" value="NC_002942.5"/>
</dbReference>
<dbReference type="SMR" id="Q5ZYN2"/>
<dbReference type="STRING" id="272624.lpg0340"/>
<dbReference type="PaxDb" id="272624-lpg0340"/>
<dbReference type="GeneID" id="57034343"/>
<dbReference type="KEGG" id="lpn:lpg0340"/>
<dbReference type="PATRIC" id="fig|272624.6.peg.347"/>
<dbReference type="eggNOG" id="COG0198">
    <property type="taxonomic scope" value="Bacteria"/>
</dbReference>
<dbReference type="HOGENOM" id="CLU_093315_2_2_6"/>
<dbReference type="OrthoDB" id="9807419at2"/>
<dbReference type="Proteomes" id="UP000000609">
    <property type="component" value="Chromosome"/>
</dbReference>
<dbReference type="GO" id="GO:1990904">
    <property type="term" value="C:ribonucleoprotein complex"/>
    <property type="evidence" value="ECO:0007669"/>
    <property type="project" value="UniProtKB-KW"/>
</dbReference>
<dbReference type="GO" id="GO:0005840">
    <property type="term" value="C:ribosome"/>
    <property type="evidence" value="ECO:0007669"/>
    <property type="project" value="UniProtKB-KW"/>
</dbReference>
<dbReference type="GO" id="GO:0019843">
    <property type="term" value="F:rRNA binding"/>
    <property type="evidence" value="ECO:0007669"/>
    <property type="project" value="UniProtKB-UniRule"/>
</dbReference>
<dbReference type="GO" id="GO:0003735">
    <property type="term" value="F:structural constituent of ribosome"/>
    <property type="evidence" value="ECO:0007669"/>
    <property type="project" value="InterPro"/>
</dbReference>
<dbReference type="GO" id="GO:0006412">
    <property type="term" value="P:translation"/>
    <property type="evidence" value="ECO:0007669"/>
    <property type="project" value="UniProtKB-UniRule"/>
</dbReference>
<dbReference type="CDD" id="cd06089">
    <property type="entry name" value="KOW_RPL26"/>
    <property type="match status" value="1"/>
</dbReference>
<dbReference type="Gene3D" id="2.30.30.30">
    <property type="match status" value="1"/>
</dbReference>
<dbReference type="HAMAP" id="MF_01326_B">
    <property type="entry name" value="Ribosomal_uL24_B"/>
    <property type="match status" value="1"/>
</dbReference>
<dbReference type="InterPro" id="IPR005824">
    <property type="entry name" value="KOW"/>
</dbReference>
<dbReference type="InterPro" id="IPR014722">
    <property type="entry name" value="Rib_uL2_dom2"/>
</dbReference>
<dbReference type="InterPro" id="IPR003256">
    <property type="entry name" value="Ribosomal_uL24"/>
</dbReference>
<dbReference type="InterPro" id="IPR005825">
    <property type="entry name" value="Ribosomal_uL24_CS"/>
</dbReference>
<dbReference type="InterPro" id="IPR041988">
    <property type="entry name" value="Ribosomal_uL24_KOW"/>
</dbReference>
<dbReference type="InterPro" id="IPR008991">
    <property type="entry name" value="Translation_prot_SH3-like_sf"/>
</dbReference>
<dbReference type="NCBIfam" id="TIGR01079">
    <property type="entry name" value="rplX_bact"/>
    <property type="match status" value="1"/>
</dbReference>
<dbReference type="PANTHER" id="PTHR12903">
    <property type="entry name" value="MITOCHONDRIAL RIBOSOMAL PROTEIN L24"/>
    <property type="match status" value="1"/>
</dbReference>
<dbReference type="Pfam" id="PF00467">
    <property type="entry name" value="KOW"/>
    <property type="match status" value="1"/>
</dbReference>
<dbReference type="Pfam" id="PF17136">
    <property type="entry name" value="ribosomal_L24"/>
    <property type="match status" value="1"/>
</dbReference>
<dbReference type="SMART" id="SM00739">
    <property type="entry name" value="KOW"/>
    <property type="match status" value="1"/>
</dbReference>
<dbReference type="SUPFAM" id="SSF50104">
    <property type="entry name" value="Translation proteins SH3-like domain"/>
    <property type="match status" value="1"/>
</dbReference>
<dbReference type="PROSITE" id="PS01108">
    <property type="entry name" value="RIBOSOMAL_L24"/>
    <property type="match status" value="1"/>
</dbReference>
<sequence>MKRIKSGDEVIVIAGKSKGHIGKVLRVIDDAVVVEGGNLIKKHIKPNPQKPENKGGIIAREAPLHVSNVAHYNPVTKKADKVGFKYLESNGVSKKVRYYKSNNEIIDRI</sequence>
<evidence type="ECO:0000255" key="1">
    <source>
        <dbReference type="HAMAP-Rule" id="MF_01326"/>
    </source>
</evidence>
<evidence type="ECO:0000305" key="2"/>